<dbReference type="EC" id="3.6.1.66" evidence="1"/>
<dbReference type="EMBL" id="CP000539">
    <property type="protein sequence ID" value="ABM41162.1"/>
    <property type="molecule type" value="Genomic_DNA"/>
</dbReference>
<dbReference type="SMR" id="A1W4I7"/>
<dbReference type="STRING" id="232721.Ajs_0922"/>
<dbReference type="KEGG" id="ajs:Ajs_0922"/>
<dbReference type="eggNOG" id="COG0127">
    <property type="taxonomic scope" value="Bacteria"/>
</dbReference>
<dbReference type="HOGENOM" id="CLU_082080_0_3_4"/>
<dbReference type="Proteomes" id="UP000000645">
    <property type="component" value="Chromosome"/>
</dbReference>
<dbReference type="GO" id="GO:0005829">
    <property type="term" value="C:cytosol"/>
    <property type="evidence" value="ECO:0007669"/>
    <property type="project" value="TreeGrafter"/>
</dbReference>
<dbReference type="GO" id="GO:0035870">
    <property type="term" value="F:dITP diphosphatase activity"/>
    <property type="evidence" value="ECO:0007669"/>
    <property type="project" value="RHEA"/>
</dbReference>
<dbReference type="GO" id="GO:0036220">
    <property type="term" value="F:ITP diphosphatase activity"/>
    <property type="evidence" value="ECO:0007669"/>
    <property type="project" value="UniProtKB-EC"/>
</dbReference>
<dbReference type="GO" id="GO:0046872">
    <property type="term" value="F:metal ion binding"/>
    <property type="evidence" value="ECO:0007669"/>
    <property type="project" value="UniProtKB-KW"/>
</dbReference>
<dbReference type="GO" id="GO:0000166">
    <property type="term" value="F:nucleotide binding"/>
    <property type="evidence" value="ECO:0007669"/>
    <property type="project" value="UniProtKB-KW"/>
</dbReference>
<dbReference type="GO" id="GO:0017111">
    <property type="term" value="F:ribonucleoside triphosphate phosphatase activity"/>
    <property type="evidence" value="ECO:0007669"/>
    <property type="project" value="InterPro"/>
</dbReference>
<dbReference type="GO" id="GO:0036222">
    <property type="term" value="F:XTP diphosphatase activity"/>
    <property type="evidence" value="ECO:0007669"/>
    <property type="project" value="RHEA"/>
</dbReference>
<dbReference type="GO" id="GO:0009117">
    <property type="term" value="P:nucleotide metabolic process"/>
    <property type="evidence" value="ECO:0007669"/>
    <property type="project" value="UniProtKB-KW"/>
</dbReference>
<dbReference type="GO" id="GO:0009146">
    <property type="term" value="P:purine nucleoside triphosphate catabolic process"/>
    <property type="evidence" value="ECO:0007669"/>
    <property type="project" value="UniProtKB-UniRule"/>
</dbReference>
<dbReference type="CDD" id="cd00515">
    <property type="entry name" value="HAM1"/>
    <property type="match status" value="1"/>
</dbReference>
<dbReference type="FunFam" id="3.90.950.10:FF:000001">
    <property type="entry name" value="dITP/XTP pyrophosphatase"/>
    <property type="match status" value="1"/>
</dbReference>
<dbReference type="Gene3D" id="3.90.950.10">
    <property type="match status" value="1"/>
</dbReference>
<dbReference type="HAMAP" id="MF_01405">
    <property type="entry name" value="Non_canon_purine_NTPase"/>
    <property type="match status" value="1"/>
</dbReference>
<dbReference type="InterPro" id="IPR020922">
    <property type="entry name" value="dITP/XTP_pyrophosphatase"/>
</dbReference>
<dbReference type="InterPro" id="IPR029001">
    <property type="entry name" value="ITPase-like_fam"/>
</dbReference>
<dbReference type="InterPro" id="IPR002637">
    <property type="entry name" value="RdgB/HAM1"/>
</dbReference>
<dbReference type="NCBIfam" id="TIGR00042">
    <property type="entry name" value="RdgB/HAM1 family non-canonical purine NTP pyrophosphatase"/>
    <property type="match status" value="1"/>
</dbReference>
<dbReference type="PANTHER" id="PTHR11067:SF9">
    <property type="entry name" value="INOSINE TRIPHOSPHATE PYROPHOSPHATASE"/>
    <property type="match status" value="1"/>
</dbReference>
<dbReference type="PANTHER" id="PTHR11067">
    <property type="entry name" value="INOSINE TRIPHOSPHATE PYROPHOSPHATASE/HAM1 PROTEIN"/>
    <property type="match status" value="1"/>
</dbReference>
<dbReference type="Pfam" id="PF01725">
    <property type="entry name" value="Ham1p_like"/>
    <property type="match status" value="1"/>
</dbReference>
<dbReference type="SUPFAM" id="SSF52972">
    <property type="entry name" value="ITPase-like"/>
    <property type="match status" value="1"/>
</dbReference>
<sequence length="205" mass="21952">MKLVLASNNRGKLAELQAMLAPLGVQLIPQAELGVGEAEEPFHTFVENALAKARFASAHTGLPALADDAGLCVQAFGGQPGVQTAYYATQFGYDKGDANNVRALLEQMQGIDDRRAAMVSTLVAVRSPQDPEPLIAVGRVAGEIARAPRGTGGFGFDPVMVLPAFGKTFAELPPEVKNAHSHRGRSSRQMLELMREHWFAGTSER</sequence>
<gene>
    <name type="ordered locus">Ajs_0922</name>
</gene>
<accession>A1W4I7</accession>
<name>IXTPA_ACISJ</name>
<keyword id="KW-0378">Hydrolase</keyword>
<keyword id="KW-0460">Magnesium</keyword>
<keyword id="KW-0479">Metal-binding</keyword>
<keyword id="KW-0546">Nucleotide metabolism</keyword>
<keyword id="KW-0547">Nucleotide-binding</keyword>
<feature type="chain" id="PRO_1000068406" description="dITP/XTP pyrophosphatase">
    <location>
        <begin position="1"/>
        <end position="205"/>
    </location>
</feature>
<feature type="active site" description="Proton acceptor" evidence="1">
    <location>
        <position position="68"/>
    </location>
</feature>
<feature type="binding site" evidence="1">
    <location>
        <begin position="7"/>
        <end position="12"/>
    </location>
    <ligand>
        <name>substrate</name>
    </ligand>
</feature>
<feature type="binding site" evidence="1">
    <location>
        <position position="39"/>
    </location>
    <ligand>
        <name>Mg(2+)</name>
        <dbReference type="ChEBI" id="CHEBI:18420"/>
    </ligand>
</feature>
<feature type="binding site" evidence="1">
    <location>
        <position position="68"/>
    </location>
    <ligand>
        <name>Mg(2+)</name>
        <dbReference type="ChEBI" id="CHEBI:18420"/>
    </ligand>
</feature>
<feature type="binding site" evidence="1">
    <location>
        <position position="69"/>
    </location>
    <ligand>
        <name>substrate</name>
    </ligand>
</feature>
<feature type="binding site" evidence="1">
    <location>
        <begin position="154"/>
        <end position="157"/>
    </location>
    <ligand>
        <name>substrate</name>
    </ligand>
</feature>
<feature type="binding site" evidence="1">
    <location>
        <position position="177"/>
    </location>
    <ligand>
        <name>substrate</name>
    </ligand>
</feature>
<feature type="binding site" evidence="1">
    <location>
        <begin position="182"/>
        <end position="183"/>
    </location>
    <ligand>
        <name>substrate</name>
    </ligand>
</feature>
<reference key="1">
    <citation type="submission" date="2006-12" db="EMBL/GenBank/DDBJ databases">
        <title>Complete sequence of chromosome 1 of Acidovorax sp. JS42.</title>
        <authorList>
            <person name="Copeland A."/>
            <person name="Lucas S."/>
            <person name="Lapidus A."/>
            <person name="Barry K."/>
            <person name="Detter J.C."/>
            <person name="Glavina del Rio T."/>
            <person name="Dalin E."/>
            <person name="Tice H."/>
            <person name="Pitluck S."/>
            <person name="Chertkov O."/>
            <person name="Brettin T."/>
            <person name="Bruce D."/>
            <person name="Han C."/>
            <person name="Tapia R."/>
            <person name="Gilna P."/>
            <person name="Schmutz J."/>
            <person name="Larimer F."/>
            <person name="Land M."/>
            <person name="Hauser L."/>
            <person name="Kyrpides N."/>
            <person name="Kim E."/>
            <person name="Stahl D."/>
            <person name="Richardson P."/>
        </authorList>
    </citation>
    <scope>NUCLEOTIDE SEQUENCE [LARGE SCALE GENOMIC DNA]</scope>
    <source>
        <strain>JS42</strain>
    </source>
</reference>
<evidence type="ECO:0000255" key="1">
    <source>
        <dbReference type="HAMAP-Rule" id="MF_01405"/>
    </source>
</evidence>
<comment type="function">
    <text evidence="1">Pyrophosphatase that catalyzes the hydrolysis of nucleoside triphosphates to their monophosphate derivatives, with a high preference for the non-canonical purine nucleotides XTP (xanthosine triphosphate), dITP (deoxyinosine triphosphate) and ITP. Seems to function as a house-cleaning enzyme that removes non-canonical purine nucleotides from the nucleotide pool, thus preventing their incorporation into DNA/RNA and avoiding chromosomal lesions.</text>
</comment>
<comment type="catalytic activity">
    <reaction evidence="1">
        <text>XTP + H2O = XMP + diphosphate + H(+)</text>
        <dbReference type="Rhea" id="RHEA:28610"/>
        <dbReference type="ChEBI" id="CHEBI:15377"/>
        <dbReference type="ChEBI" id="CHEBI:15378"/>
        <dbReference type="ChEBI" id="CHEBI:33019"/>
        <dbReference type="ChEBI" id="CHEBI:57464"/>
        <dbReference type="ChEBI" id="CHEBI:61314"/>
        <dbReference type="EC" id="3.6.1.66"/>
    </reaction>
</comment>
<comment type="catalytic activity">
    <reaction evidence="1">
        <text>dITP + H2O = dIMP + diphosphate + H(+)</text>
        <dbReference type="Rhea" id="RHEA:28342"/>
        <dbReference type="ChEBI" id="CHEBI:15377"/>
        <dbReference type="ChEBI" id="CHEBI:15378"/>
        <dbReference type="ChEBI" id="CHEBI:33019"/>
        <dbReference type="ChEBI" id="CHEBI:61194"/>
        <dbReference type="ChEBI" id="CHEBI:61382"/>
        <dbReference type="EC" id="3.6.1.66"/>
    </reaction>
</comment>
<comment type="catalytic activity">
    <reaction evidence="1">
        <text>ITP + H2O = IMP + diphosphate + H(+)</text>
        <dbReference type="Rhea" id="RHEA:29399"/>
        <dbReference type="ChEBI" id="CHEBI:15377"/>
        <dbReference type="ChEBI" id="CHEBI:15378"/>
        <dbReference type="ChEBI" id="CHEBI:33019"/>
        <dbReference type="ChEBI" id="CHEBI:58053"/>
        <dbReference type="ChEBI" id="CHEBI:61402"/>
        <dbReference type="EC" id="3.6.1.66"/>
    </reaction>
</comment>
<comment type="cofactor">
    <cofactor evidence="1">
        <name>Mg(2+)</name>
        <dbReference type="ChEBI" id="CHEBI:18420"/>
    </cofactor>
    <text evidence="1">Binds 1 Mg(2+) ion per subunit.</text>
</comment>
<comment type="subunit">
    <text evidence="1">Homodimer.</text>
</comment>
<comment type="similarity">
    <text evidence="1">Belongs to the HAM1 NTPase family.</text>
</comment>
<organism>
    <name type="scientific">Acidovorax sp. (strain JS42)</name>
    <dbReference type="NCBI Taxonomy" id="232721"/>
    <lineage>
        <taxon>Bacteria</taxon>
        <taxon>Pseudomonadati</taxon>
        <taxon>Pseudomonadota</taxon>
        <taxon>Betaproteobacteria</taxon>
        <taxon>Burkholderiales</taxon>
        <taxon>Comamonadaceae</taxon>
        <taxon>Acidovorax</taxon>
    </lineage>
</organism>
<protein>
    <recommendedName>
        <fullName evidence="1">dITP/XTP pyrophosphatase</fullName>
        <ecNumber evidence="1">3.6.1.66</ecNumber>
    </recommendedName>
    <alternativeName>
        <fullName evidence="1">Non-canonical purine NTP pyrophosphatase</fullName>
    </alternativeName>
    <alternativeName>
        <fullName evidence="1">Non-standard purine NTP pyrophosphatase</fullName>
    </alternativeName>
    <alternativeName>
        <fullName evidence="1">Nucleoside-triphosphate diphosphatase</fullName>
    </alternativeName>
    <alternativeName>
        <fullName evidence="1">Nucleoside-triphosphate pyrophosphatase</fullName>
        <shortName evidence="1">NTPase</shortName>
    </alternativeName>
</protein>
<proteinExistence type="inferred from homology"/>